<reference key="1">
    <citation type="journal article" date="1996" name="J. Bacteriol.">
        <title>Organization of Ureaplasma urealyticum urease gene cluster and expression in a suppressor strain of Escherichia coli.</title>
        <authorList>
            <person name="Neyrolles O."/>
            <person name="Ferris S."/>
            <person name="Behbahani N."/>
            <person name="Montagnier L."/>
            <person name="Blanchard A."/>
        </authorList>
    </citation>
    <scope>NUCLEOTIDE SEQUENCE [GENOMIC DNA]</scope>
    <source>
        <strain>ATCC 27618 / CIP 103755 / NCTC 10177 / T960 / Serovar 8</strain>
    </source>
</reference>
<protein>
    <recommendedName>
        <fullName>Uncharacterized protein UU427 homolog</fullName>
    </recommendedName>
</protein>
<comment type="sequence caution" evidence="2">
    <conflict type="erroneous initiation">
        <sequence resource="EMBL-CDS" id="AAA89195"/>
    </conflict>
</comment>
<evidence type="ECO:0000255" key="1">
    <source>
        <dbReference type="PROSITE-ProRule" id="PRU00085"/>
    </source>
</evidence>
<evidence type="ECO:0000305" key="2"/>
<name>Y427_UREUR</name>
<keyword id="KW-0408">Iron</keyword>
<sequence>MANSQKVIDVSNAHYNLNLELGSVYAQYAHIADDQFSMPFLAKFINDLSNDKLGVHKDLISEYARKIEIPLHTKFSVDVSFKPTDPKELVKHILETEQKVRKHVANMAKVCLEEGDFETFSFVKWFVDDGIKDFDDVRTIHDFFENGNNNLQVEYAIRQIFKANEAWGRKII</sequence>
<proteinExistence type="predicted"/>
<organism>
    <name type="scientific">Ureaplasma urealyticum</name>
    <name type="common">Ureaplasma urealyticum biotype 2</name>
    <dbReference type="NCBI Taxonomy" id="2130"/>
    <lineage>
        <taxon>Bacteria</taxon>
        <taxon>Bacillati</taxon>
        <taxon>Mycoplasmatota</taxon>
        <taxon>Mycoplasmoidales</taxon>
        <taxon>Mycoplasmoidaceae</taxon>
        <taxon>Ureaplasma</taxon>
    </lineage>
</organism>
<dbReference type="EMBL" id="L40490">
    <property type="protein sequence ID" value="AAA89195.1"/>
    <property type="status" value="ALT_INIT"/>
    <property type="molecule type" value="Genomic_DNA"/>
</dbReference>
<dbReference type="SMR" id="Q56564"/>
<dbReference type="GO" id="GO:0008199">
    <property type="term" value="F:ferric iron binding"/>
    <property type="evidence" value="ECO:0007669"/>
    <property type="project" value="InterPro"/>
</dbReference>
<dbReference type="Gene3D" id="1.20.1260.10">
    <property type="match status" value="1"/>
</dbReference>
<dbReference type="InterPro" id="IPR012347">
    <property type="entry name" value="Ferritin-like"/>
</dbReference>
<dbReference type="InterPro" id="IPR009040">
    <property type="entry name" value="Ferritin-like_diiron"/>
</dbReference>
<dbReference type="InterPro" id="IPR009078">
    <property type="entry name" value="Ferritin-like_SF"/>
</dbReference>
<dbReference type="InterPro" id="IPR008331">
    <property type="entry name" value="Ferritin_DPS_dom"/>
</dbReference>
<dbReference type="Pfam" id="PF00210">
    <property type="entry name" value="Ferritin"/>
    <property type="match status" value="1"/>
</dbReference>
<dbReference type="SUPFAM" id="SSF47240">
    <property type="entry name" value="Ferritin-like"/>
    <property type="match status" value="1"/>
</dbReference>
<dbReference type="PROSITE" id="PS50905">
    <property type="entry name" value="FERRITIN_LIKE"/>
    <property type="match status" value="1"/>
</dbReference>
<feature type="chain" id="PRO_0000135070" description="Uncharacterized protein UU427 homolog">
    <location>
        <begin position="1"/>
        <end position="172"/>
    </location>
</feature>
<feature type="domain" description="Ferritin-like diiron" evidence="1">
    <location>
        <begin position="1"/>
        <end position="148"/>
    </location>
</feature>
<accession>Q56564</accession>